<comment type="function">
    <text evidence="1">Located on the platform of the 30S subunit, it bridges several disparate RNA helices of the 16S rRNA. Forms part of the Shine-Dalgarno cleft in the 70S ribosome.</text>
</comment>
<comment type="subunit">
    <text evidence="1">Part of the 30S ribosomal subunit. Interacts with proteins S7 and S18. Binds to IF-3.</text>
</comment>
<comment type="similarity">
    <text evidence="1">Belongs to the universal ribosomal protein uS11 family.</text>
</comment>
<reference key="1">
    <citation type="journal article" date="2003" name="Nat. Biotechnol.">
        <title>The genome sequence of the entomopathogenic bacterium Photorhabdus luminescens.</title>
        <authorList>
            <person name="Duchaud E."/>
            <person name="Rusniok C."/>
            <person name="Frangeul L."/>
            <person name="Buchrieser C."/>
            <person name="Givaudan A."/>
            <person name="Taourit S."/>
            <person name="Bocs S."/>
            <person name="Boursaux-Eude C."/>
            <person name="Chandler M."/>
            <person name="Charles J.-F."/>
            <person name="Dassa E."/>
            <person name="Derose R."/>
            <person name="Derzelle S."/>
            <person name="Freyssinet G."/>
            <person name="Gaudriault S."/>
            <person name="Medigue C."/>
            <person name="Lanois A."/>
            <person name="Powell K."/>
            <person name="Siguier P."/>
            <person name="Vincent R."/>
            <person name="Wingate V."/>
            <person name="Zouine M."/>
            <person name="Glaser P."/>
            <person name="Boemare N."/>
            <person name="Danchin A."/>
            <person name="Kunst F."/>
        </authorList>
    </citation>
    <scope>NUCLEOTIDE SEQUENCE [LARGE SCALE GENOMIC DNA]</scope>
    <source>
        <strain>DSM 15139 / CIP 105565 / TT01</strain>
    </source>
</reference>
<sequence length="129" mass="13859">MAKAPIRARKRVRKQVSDGVAHIHASFNNTIVTITDRQGNALGWATAGGSGFRGSRKSTPFAAQVAAERCAEAVKEYGIKNLEVMVKGPGPGRESTIRALNAAGFRITNITDVTPIPHNGCRPPKKRRV</sequence>
<gene>
    <name evidence="1" type="primary">rpsK</name>
    <name type="ordered locus">plu4704</name>
</gene>
<organism>
    <name type="scientific">Photorhabdus laumondii subsp. laumondii (strain DSM 15139 / CIP 105565 / TT01)</name>
    <name type="common">Photorhabdus luminescens subsp. laumondii</name>
    <dbReference type="NCBI Taxonomy" id="243265"/>
    <lineage>
        <taxon>Bacteria</taxon>
        <taxon>Pseudomonadati</taxon>
        <taxon>Pseudomonadota</taxon>
        <taxon>Gammaproteobacteria</taxon>
        <taxon>Enterobacterales</taxon>
        <taxon>Morganellaceae</taxon>
        <taxon>Photorhabdus</taxon>
    </lineage>
</organism>
<protein>
    <recommendedName>
        <fullName evidence="1">Small ribosomal subunit protein uS11</fullName>
    </recommendedName>
    <alternativeName>
        <fullName evidence="2">30S ribosomal protein S11</fullName>
    </alternativeName>
</protein>
<keyword id="KW-1185">Reference proteome</keyword>
<keyword id="KW-0687">Ribonucleoprotein</keyword>
<keyword id="KW-0689">Ribosomal protein</keyword>
<keyword id="KW-0694">RNA-binding</keyword>
<keyword id="KW-0699">rRNA-binding</keyword>
<dbReference type="EMBL" id="BX571874">
    <property type="protein sequence ID" value="CAE17076.1"/>
    <property type="molecule type" value="Genomic_DNA"/>
</dbReference>
<dbReference type="RefSeq" id="WP_002919257.1">
    <property type="nucleotide sequence ID" value="NC_005126.1"/>
</dbReference>
<dbReference type="SMR" id="Q7MYH3"/>
<dbReference type="STRING" id="243265.plu4704"/>
<dbReference type="GeneID" id="97125494"/>
<dbReference type="KEGG" id="plu:plu4704"/>
<dbReference type="eggNOG" id="COG0100">
    <property type="taxonomic scope" value="Bacteria"/>
</dbReference>
<dbReference type="HOGENOM" id="CLU_072439_5_0_6"/>
<dbReference type="OrthoDB" id="9806415at2"/>
<dbReference type="Proteomes" id="UP000002514">
    <property type="component" value="Chromosome"/>
</dbReference>
<dbReference type="GO" id="GO:1990904">
    <property type="term" value="C:ribonucleoprotein complex"/>
    <property type="evidence" value="ECO:0007669"/>
    <property type="project" value="UniProtKB-KW"/>
</dbReference>
<dbReference type="GO" id="GO:0005840">
    <property type="term" value="C:ribosome"/>
    <property type="evidence" value="ECO:0007669"/>
    <property type="project" value="UniProtKB-KW"/>
</dbReference>
<dbReference type="GO" id="GO:0019843">
    <property type="term" value="F:rRNA binding"/>
    <property type="evidence" value="ECO:0007669"/>
    <property type="project" value="UniProtKB-UniRule"/>
</dbReference>
<dbReference type="GO" id="GO:0003735">
    <property type="term" value="F:structural constituent of ribosome"/>
    <property type="evidence" value="ECO:0007669"/>
    <property type="project" value="InterPro"/>
</dbReference>
<dbReference type="GO" id="GO:0006412">
    <property type="term" value="P:translation"/>
    <property type="evidence" value="ECO:0007669"/>
    <property type="project" value="UniProtKB-UniRule"/>
</dbReference>
<dbReference type="FunFam" id="3.30.420.80:FF:000001">
    <property type="entry name" value="30S ribosomal protein S11"/>
    <property type="match status" value="1"/>
</dbReference>
<dbReference type="Gene3D" id="3.30.420.80">
    <property type="entry name" value="Ribosomal protein S11"/>
    <property type="match status" value="1"/>
</dbReference>
<dbReference type="HAMAP" id="MF_01310">
    <property type="entry name" value="Ribosomal_uS11"/>
    <property type="match status" value="1"/>
</dbReference>
<dbReference type="InterPro" id="IPR001971">
    <property type="entry name" value="Ribosomal_uS11"/>
</dbReference>
<dbReference type="InterPro" id="IPR019981">
    <property type="entry name" value="Ribosomal_uS11_bac-type"/>
</dbReference>
<dbReference type="InterPro" id="IPR018102">
    <property type="entry name" value="Ribosomal_uS11_CS"/>
</dbReference>
<dbReference type="InterPro" id="IPR036967">
    <property type="entry name" value="Ribosomal_uS11_sf"/>
</dbReference>
<dbReference type="NCBIfam" id="NF003698">
    <property type="entry name" value="PRK05309.1"/>
    <property type="match status" value="1"/>
</dbReference>
<dbReference type="NCBIfam" id="TIGR03632">
    <property type="entry name" value="uS11_bact"/>
    <property type="match status" value="1"/>
</dbReference>
<dbReference type="PANTHER" id="PTHR11759">
    <property type="entry name" value="40S RIBOSOMAL PROTEIN S14/30S RIBOSOMAL PROTEIN S11"/>
    <property type="match status" value="1"/>
</dbReference>
<dbReference type="Pfam" id="PF00411">
    <property type="entry name" value="Ribosomal_S11"/>
    <property type="match status" value="1"/>
</dbReference>
<dbReference type="PIRSF" id="PIRSF002131">
    <property type="entry name" value="Ribosomal_S11"/>
    <property type="match status" value="1"/>
</dbReference>
<dbReference type="SUPFAM" id="SSF53137">
    <property type="entry name" value="Translational machinery components"/>
    <property type="match status" value="1"/>
</dbReference>
<dbReference type="PROSITE" id="PS00054">
    <property type="entry name" value="RIBOSOMAL_S11"/>
    <property type="match status" value="1"/>
</dbReference>
<accession>Q7MYH3</accession>
<feature type="chain" id="PRO_0000123194" description="Small ribosomal subunit protein uS11">
    <location>
        <begin position="1"/>
        <end position="129"/>
    </location>
</feature>
<name>RS11_PHOLL</name>
<proteinExistence type="inferred from homology"/>
<evidence type="ECO:0000255" key="1">
    <source>
        <dbReference type="HAMAP-Rule" id="MF_01310"/>
    </source>
</evidence>
<evidence type="ECO:0000305" key="2"/>